<name>ALR_BRUO2</name>
<feature type="chain" id="PRO_1000065973" description="Alanine racemase">
    <location>
        <begin position="1"/>
        <end position="396"/>
    </location>
</feature>
<feature type="active site" description="Proton acceptor; specific for D-alanine" evidence="1">
    <location>
        <position position="46"/>
    </location>
</feature>
<feature type="active site" description="Proton acceptor; specific for L-alanine" evidence="1">
    <location>
        <position position="280"/>
    </location>
</feature>
<feature type="binding site" evidence="1">
    <location>
        <position position="145"/>
    </location>
    <ligand>
        <name>substrate</name>
    </ligand>
</feature>
<feature type="binding site" evidence="1">
    <location>
        <position position="328"/>
    </location>
    <ligand>
        <name>substrate</name>
    </ligand>
</feature>
<feature type="modified residue" description="N6-(pyridoxal phosphate)lysine" evidence="1">
    <location>
        <position position="46"/>
    </location>
</feature>
<gene>
    <name type="primary">alr</name>
    <name type="ordered locus">BOV_A0865</name>
</gene>
<comment type="function">
    <text evidence="1">Catalyzes the interconversion of L-alanine and D-alanine. May also act on other amino acids.</text>
</comment>
<comment type="catalytic activity">
    <reaction evidence="1">
        <text>L-alanine = D-alanine</text>
        <dbReference type="Rhea" id="RHEA:20249"/>
        <dbReference type="ChEBI" id="CHEBI:57416"/>
        <dbReference type="ChEBI" id="CHEBI:57972"/>
        <dbReference type="EC" id="5.1.1.1"/>
    </reaction>
</comment>
<comment type="cofactor">
    <cofactor evidence="1">
        <name>pyridoxal 5'-phosphate</name>
        <dbReference type="ChEBI" id="CHEBI:597326"/>
    </cofactor>
</comment>
<comment type="pathway">
    <text evidence="1">Amino-acid biosynthesis; D-alanine biosynthesis; D-alanine from L-alanine: step 1/1.</text>
</comment>
<comment type="similarity">
    <text evidence="1">Belongs to the alanine racemase family.</text>
</comment>
<accession>A5VVI9</accession>
<protein>
    <recommendedName>
        <fullName evidence="1">Alanine racemase</fullName>
        <ecNumber evidence="1">5.1.1.1</ecNumber>
    </recommendedName>
</protein>
<keyword id="KW-0413">Isomerase</keyword>
<keyword id="KW-0663">Pyridoxal phosphate</keyword>
<reference key="1">
    <citation type="journal article" date="2009" name="PLoS ONE">
        <title>Genome degradation in Brucella ovis corresponds with narrowing of its host range and tissue tropism.</title>
        <authorList>
            <person name="Tsolis R.M."/>
            <person name="Seshadri R."/>
            <person name="Santos R.L."/>
            <person name="Sangari F.J."/>
            <person name="Lobo J.M."/>
            <person name="de Jong M.F."/>
            <person name="Ren Q."/>
            <person name="Myers G."/>
            <person name="Brinkac L.M."/>
            <person name="Nelson W.C."/>
            <person name="Deboy R.T."/>
            <person name="Angiuoli S."/>
            <person name="Khouri H."/>
            <person name="Dimitrov G."/>
            <person name="Robinson J.R."/>
            <person name="Mulligan S."/>
            <person name="Walker R.L."/>
            <person name="Elzer P.E."/>
            <person name="Hassan K.A."/>
            <person name="Paulsen I.T."/>
        </authorList>
    </citation>
    <scope>NUCLEOTIDE SEQUENCE [LARGE SCALE GENOMIC DNA]</scope>
    <source>
        <strain>ATCC 25840 / 63/290 / NCTC 10512</strain>
    </source>
</reference>
<evidence type="ECO:0000255" key="1">
    <source>
        <dbReference type="HAMAP-Rule" id="MF_01201"/>
    </source>
</evidence>
<sequence length="396" mass="42336">MSLPFSQDERDLAAGGILTIDLAALRHNYSAIATRIAPTRTAAVVKADAYGLGASRVAPAFYEAGCRDFFVAHLGEAVALKPFLKPDATLYVLNGLQPGTEAACAREGILPVLNSLEQVENWAALATRLGKKLPALLQFDTGMSRLGLSAKEFDRLLENVTLLSRIDIKFAISHLANGDEPGNAANARQLAKMTALLARLPKLPAALANSGGTFLGKTYYFDLARPGIALYGIDPERQHDFSDKVAHENKKPKHSILPVLPLSARVIQVRDVDKGATVGYGGTYVANGPMRIATIAVGYADGLFRSLSNKGAAFFGDTRLPIIGRVSMDSITLDVTSLPEGTLKLGSLVELIGPHQRLEDVARDCDTIPYEILTALGNRYARVYVYVNGGGTSTTA</sequence>
<dbReference type="EC" id="5.1.1.1" evidence="1"/>
<dbReference type="EMBL" id="CP000709">
    <property type="protein sequence ID" value="ABQ62134.1"/>
    <property type="molecule type" value="Genomic_DNA"/>
</dbReference>
<dbReference type="SMR" id="A5VVI9"/>
<dbReference type="KEGG" id="bov:BOV_A0865"/>
<dbReference type="HOGENOM" id="CLU_028393_1_1_5"/>
<dbReference type="UniPathway" id="UPA00042">
    <property type="reaction ID" value="UER00497"/>
</dbReference>
<dbReference type="Proteomes" id="UP000006383">
    <property type="component" value="Chromosome II"/>
</dbReference>
<dbReference type="GO" id="GO:0005829">
    <property type="term" value="C:cytosol"/>
    <property type="evidence" value="ECO:0007669"/>
    <property type="project" value="TreeGrafter"/>
</dbReference>
<dbReference type="GO" id="GO:0008784">
    <property type="term" value="F:alanine racemase activity"/>
    <property type="evidence" value="ECO:0007669"/>
    <property type="project" value="UniProtKB-UniRule"/>
</dbReference>
<dbReference type="GO" id="GO:0030170">
    <property type="term" value="F:pyridoxal phosphate binding"/>
    <property type="evidence" value="ECO:0007669"/>
    <property type="project" value="UniProtKB-UniRule"/>
</dbReference>
<dbReference type="GO" id="GO:0030632">
    <property type="term" value="P:D-alanine biosynthetic process"/>
    <property type="evidence" value="ECO:0007669"/>
    <property type="project" value="UniProtKB-UniRule"/>
</dbReference>
<dbReference type="CDD" id="cd00430">
    <property type="entry name" value="PLPDE_III_AR"/>
    <property type="match status" value="1"/>
</dbReference>
<dbReference type="Gene3D" id="3.20.20.10">
    <property type="entry name" value="Alanine racemase"/>
    <property type="match status" value="1"/>
</dbReference>
<dbReference type="Gene3D" id="2.40.37.10">
    <property type="entry name" value="Lyase, Ornithine Decarboxylase, Chain A, domain 1"/>
    <property type="match status" value="1"/>
</dbReference>
<dbReference type="HAMAP" id="MF_01201">
    <property type="entry name" value="Ala_racemase"/>
    <property type="match status" value="1"/>
</dbReference>
<dbReference type="InterPro" id="IPR000821">
    <property type="entry name" value="Ala_racemase"/>
</dbReference>
<dbReference type="InterPro" id="IPR009006">
    <property type="entry name" value="Ala_racemase/Decarboxylase_C"/>
</dbReference>
<dbReference type="InterPro" id="IPR011079">
    <property type="entry name" value="Ala_racemase_C"/>
</dbReference>
<dbReference type="InterPro" id="IPR001608">
    <property type="entry name" value="Ala_racemase_N"/>
</dbReference>
<dbReference type="InterPro" id="IPR020622">
    <property type="entry name" value="Ala_racemase_pyridoxalP-BS"/>
</dbReference>
<dbReference type="InterPro" id="IPR029066">
    <property type="entry name" value="PLP-binding_barrel"/>
</dbReference>
<dbReference type="NCBIfam" id="TIGR00492">
    <property type="entry name" value="alr"/>
    <property type="match status" value="1"/>
</dbReference>
<dbReference type="PANTHER" id="PTHR30511">
    <property type="entry name" value="ALANINE RACEMASE"/>
    <property type="match status" value="1"/>
</dbReference>
<dbReference type="PANTHER" id="PTHR30511:SF0">
    <property type="entry name" value="ALANINE RACEMASE, CATABOLIC-RELATED"/>
    <property type="match status" value="1"/>
</dbReference>
<dbReference type="Pfam" id="PF00842">
    <property type="entry name" value="Ala_racemase_C"/>
    <property type="match status" value="1"/>
</dbReference>
<dbReference type="Pfam" id="PF01168">
    <property type="entry name" value="Ala_racemase_N"/>
    <property type="match status" value="1"/>
</dbReference>
<dbReference type="PRINTS" id="PR00992">
    <property type="entry name" value="ALARACEMASE"/>
</dbReference>
<dbReference type="SMART" id="SM01005">
    <property type="entry name" value="Ala_racemase_C"/>
    <property type="match status" value="1"/>
</dbReference>
<dbReference type="SUPFAM" id="SSF50621">
    <property type="entry name" value="Alanine racemase C-terminal domain-like"/>
    <property type="match status" value="1"/>
</dbReference>
<dbReference type="SUPFAM" id="SSF51419">
    <property type="entry name" value="PLP-binding barrel"/>
    <property type="match status" value="1"/>
</dbReference>
<dbReference type="PROSITE" id="PS00395">
    <property type="entry name" value="ALANINE_RACEMASE"/>
    <property type="match status" value="1"/>
</dbReference>
<organism>
    <name type="scientific">Brucella ovis (strain ATCC 25840 / 63/290 / NCTC 10512)</name>
    <dbReference type="NCBI Taxonomy" id="444178"/>
    <lineage>
        <taxon>Bacteria</taxon>
        <taxon>Pseudomonadati</taxon>
        <taxon>Pseudomonadota</taxon>
        <taxon>Alphaproteobacteria</taxon>
        <taxon>Hyphomicrobiales</taxon>
        <taxon>Brucellaceae</taxon>
        <taxon>Brucella/Ochrobactrum group</taxon>
        <taxon>Brucella</taxon>
    </lineage>
</organism>
<proteinExistence type="inferred from homology"/>